<dbReference type="EMBL" id="U28687">
    <property type="protein sequence ID" value="AAA97578.1"/>
    <property type="molecule type" value="mRNA"/>
</dbReference>
<dbReference type="EMBL" id="AL590223">
    <property type="status" value="NOT_ANNOTATED_CDS"/>
    <property type="molecule type" value="Genomic_DNA"/>
</dbReference>
<dbReference type="EMBL" id="AL591503">
    <property type="status" value="NOT_ANNOTATED_CDS"/>
    <property type="molecule type" value="Genomic_DNA"/>
</dbReference>
<dbReference type="EMBL" id="BC075003">
    <property type="protein sequence ID" value="AAH75003.1"/>
    <property type="molecule type" value="mRNA"/>
</dbReference>
<dbReference type="CCDS" id="CCDS14278.1"/>
<dbReference type="RefSeq" id="NP_003437.2">
    <property type="nucleotide sequence ID" value="NM_003446.4"/>
</dbReference>
<dbReference type="SMR" id="P51786"/>
<dbReference type="BioGRID" id="113506">
    <property type="interactions" value="8"/>
</dbReference>
<dbReference type="FunCoup" id="P51786">
    <property type="interactions" value="3"/>
</dbReference>
<dbReference type="IntAct" id="P51786">
    <property type="interactions" value="2"/>
</dbReference>
<dbReference type="STRING" id="9606.ENSP00000366273"/>
<dbReference type="GlyGen" id="P51786">
    <property type="glycosylation" value="1 site, 1 N-linked glycan (1 site)"/>
</dbReference>
<dbReference type="iPTMnet" id="P51786"/>
<dbReference type="PhosphoSitePlus" id="P51786"/>
<dbReference type="BioMuta" id="ZNF157"/>
<dbReference type="DMDM" id="62299056"/>
<dbReference type="jPOST" id="P51786"/>
<dbReference type="MassIVE" id="P51786"/>
<dbReference type="PaxDb" id="9606-ENSP00000366273"/>
<dbReference type="PeptideAtlas" id="P51786"/>
<dbReference type="ProteomicsDB" id="56382"/>
<dbReference type="Antibodypedia" id="523">
    <property type="antibodies" value="69 antibodies from 22 providers"/>
</dbReference>
<dbReference type="DNASU" id="7712"/>
<dbReference type="Ensembl" id="ENST00000377073.4">
    <property type="protein sequence ID" value="ENSP00000366273.4"/>
    <property type="gene ID" value="ENSG00000147117.8"/>
</dbReference>
<dbReference type="GeneID" id="7712"/>
<dbReference type="KEGG" id="hsa:7712"/>
<dbReference type="MANE-Select" id="ENST00000377073.4">
    <property type="protein sequence ID" value="ENSP00000366273.4"/>
    <property type="RefSeq nucleotide sequence ID" value="NM_003446.4"/>
    <property type="RefSeq protein sequence ID" value="NP_003437.2"/>
</dbReference>
<dbReference type="UCSC" id="uc004dhr.2">
    <property type="organism name" value="human"/>
</dbReference>
<dbReference type="AGR" id="HGNC:12942"/>
<dbReference type="CTD" id="7712"/>
<dbReference type="DisGeNET" id="7712"/>
<dbReference type="GeneCards" id="ZNF157"/>
<dbReference type="HGNC" id="HGNC:12942">
    <property type="gene designation" value="ZNF157"/>
</dbReference>
<dbReference type="HPA" id="ENSG00000147117">
    <property type="expression patterns" value="Low tissue specificity"/>
</dbReference>
<dbReference type="MIM" id="300024">
    <property type="type" value="gene"/>
</dbReference>
<dbReference type="neXtProt" id="NX_P51786"/>
<dbReference type="OpenTargets" id="ENSG00000147117"/>
<dbReference type="PharmGKB" id="PA37525"/>
<dbReference type="VEuPathDB" id="HostDB:ENSG00000147117"/>
<dbReference type="eggNOG" id="KOG1721">
    <property type="taxonomic scope" value="Eukaryota"/>
</dbReference>
<dbReference type="GeneTree" id="ENSGT00940000162890"/>
<dbReference type="HOGENOM" id="CLU_002678_44_3_1"/>
<dbReference type="InParanoid" id="P51786"/>
<dbReference type="OMA" id="NFGCHEC"/>
<dbReference type="OrthoDB" id="6591996at2759"/>
<dbReference type="PAN-GO" id="P51786">
    <property type="GO annotations" value="4 GO annotations based on evolutionary models"/>
</dbReference>
<dbReference type="PhylomeDB" id="P51786"/>
<dbReference type="TreeFam" id="TF337898"/>
<dbReference type="PathwayCommons" id="P51786"/>
<dbReference type="Reactome" id="R-HSA-212436">
    <property type="pathway name" value="Generic Transcription Pathway"/>
</dbReference>
<dbReference type="SignaLink" id="P51786"/>
<dbReference type="BioGRID-ORCS" id="7712">
    <property type="hits" value="9 hits in 797 CRISPR screens"/>
</dbReference>
<dbReference type="ChiTaRS" id="ZNF157">
    <property type="organism name" value="human"/>
</dbReference>
<dbReference type="GenomeRNAi" id="7712"/>
<dbReference type="Pharos" id="P51786">
    <property type="development level" value="Tdark"/>
</dbReference>
<dbReference type="PRO" id="PR:P51786"/>
<dbReference type="Proteomes" id="UP000005640">
    <property type="component" value="Chromosome X"/>
</dbReference>
<dbReference type="RNAct" id="P51786">
    <property type="molecule type" value="protein"/>
</dbReference>
<dbReference type="Bgee" id="ENSG00000147117">
    <property type="expression patterns" value="Expressed in cortical plate and 64 other cell types or tissues"/>
</dbReference>
<dbReference type="GO" id="GO:0005634">
    <property type="term" value="C:nucleus"/>
    <property type="evidence" value="ECO:0007669"/>
    <property type="project" value="UniProtKB-SubCell"/>
</dbReference>
<dbReference type="GO" id="GO:0003677">
    <property type="term" value="F:DNA binding"/>
    <property type="evidence" value="ECO:0007669"/>
    <property type="project" value="UniProtKB-KW"/>
</dbReference>
<dbReference type="GO" id="GO:0008270">
    <property type="term" value="F:zinc ion binding"/>
    <property type="evidence" value="ECO:0007669"/>
    <property type="project" value="UniProtKB-KW"/>
</dbReference>
<dbReference type="GO" id="GO:0006355">
    <property type="term" value="P:regulation of DNA-templated transcription"/>
    <property type="evidence" value="ECO:0007669"/>
    <property type="project" value="InterPro"/>
</dbReference>
<dbReference type="CDD" id="cd07765">
    <property type="entry name" value="KRAB_A-box"/>
    <property type="match status" value="1"/>
</dbReference>
<dbReference type="FunFam" id="3.30.160.60:FF:000870">
    <property type="entry name" value="zinc finger protein 197 isoform X1"/>
    <property type="match status" value="1"/>
</dbReference>
<dbReference type="FunFam" id="3.30.160.60:FF:000128">
    <property type="entry name" value="zinc finger protein 268 isoform X1"/>
    <property type="match status" value="1"/>
</dbReference>
<dbReference type="FunFam" id="3.30.160.60:FF:002343">
    <property type="entry name" value="Zinc finger protein 33A"/>
    <property type="match status" value="5"/>
</dbReference>
<dbReference type="FunFam" id="3.30.160.60:FF:000200">
    <property type="entry name" value="zinc finger protein 510 isoform X2"/>
    <property type="match status" value="1"/>
</dbReference>
<dbReference type="FunFam" id="3.30.160.60:FF:001174">
    <property type="entry name" value="zinc finger protein 527 isoform X1"/>
    <property type="match status" value="1"/>
</dbReference>
<dbReference type="FunFam" id="3.30.160.60:FF:001437">
    <property type="entry name" value="Zinc finger protein 594"/>
    <property type="match status" value="1"/>
</dbReference>
<dbReference type="FunFam" id="3.30.160.60:FF:000176">
    <property type="entry name" value="zinc finger protein 70"/>
    <property type="match status" value="1"/>
</dbReference>
<dbReference type="FunFam" id="3.30.160.60:FF:001157">
    <property type="entry name" value="Zinc finger protein 793"/>
    <property type="match status" value="1"/>
</dbReference>
<dbReference type="Gene3D" id="6.10.140.140">
    <property type="match status" value="1"/>
</dbReference>
<dbReference type="Gene3D" id="3.30.160.60">
    <property type="entry name" value="Classic Zinc Finger"/>
    <property type="match status" value="12"/>
</dbReference>
<dbReference type="InterPro" id="IPR001909">
    <property type="entry name" value="KRAB"/>
</dbReference>
<dbReference type="InterPro" id="IPR036051">
    <property type="entry name" value="KRAB_dom_sf"/>
</dbReference>
<dbReference type="InterPro" id="IPR036236">
    <property type="entry name" value="Znf_C2H2_sf"/>
</dbReference>
<dbReference type="InterPro" id="IPR013087">
    <property type="entry name" value="Znf_C2H2_type"/>
</dbReference>
<dbReference type="PANTHER" id="PTHR23235:SF178">
    <property type="entry name" value="C2H2-TYPE DOMAIN-CONTAINING PROTEIN-RELATED"/>
    <property type="match status" value="1"/>
</dbReference>
<dbReference type="PANTHER" id="PTHR23235">
    <property type="entry name" value="KRUEPPEL-LIKE TRANSCRIPTION FACTOR"/>
    <property type="match status" value="1"/>
</dbReference>
<dbReference type="Pfam" id="PF01352">
    <property type="entry name" value="KRAB"/>
    <property type="match status" value="1"/>
</dbReference>
<dbReference type="Pfam" id="PF00096">
    <property type="entry name" value="zf-C2H2"/>
    <property type="match status" value="12"/>
</dbReference>
<dbReference type="SMART" id="SM00349">
    <property type="entry name" value="KRAB"/>
    <property type="match status" value="1"/>
</dbReference>
<dbReference type="SMART" id="SM00355">
    <property type="entry name" value="ZnF_C2H2"/>
    <property type="match status" value="12"/>
</dbReference>
<dbReference type="SUPFAM" id="SSF57667">
    <property type="entry name" value="beta-beta-alpha zinc fingers"/>
    <property type="match status" value="7"/>
</dbReference>
<dbReference type="SUPFAM" id="SSF109640">
    <property type="entry name" value="KRAB domain (Kruppel-associated box)"/>
    <property type="match status" value="1"/>
</dbReference>
<dbReference type="PROSITE" id="PS50805">
    <property type="entry name" value="KRAB"/>
    <property type="match status" value="1"/>
</dbReference>
<dbReference type="PROSITE" id="PS00028">
    <property type="entry name" value="ZINC_FINGER_C2H2_1"/>
    <property type="match status" value="12"/>
</dbReference>
<dbReference type="PROSITE" id="PS50157">
    <property type="entry name" value="ZINC_FINGER_C2H2_2"/>
    <property type="match status" value="12"/>
</dbReference>
<organism>
    <name type="scientific">Homo sapiens</name>
    <name type="common">Human</name>
    <dbReference type="NCBI Taxonomy" id="9606"/>
    <lineage>
        <taxon>Eukaryota</taxon>
        <taxon>Metazoa</taxon>
        <taxon>Chordata</taxon>
        <taxon>Craniata</taxon>
        <taxon>Vertebrata</taxon>
        <taxon>Euteleostomi</taxon>
        <taxon>Mammalia</taxon>
        <taxon>Eutheria</taxon>
        <taxon>Euarchontoglires</taxon>
        <taxon>Primates</taxon>
        <taxon>Haplorrhini</taxon>
        <taxon>Catarrhini</taxon>
        <taxon>Hominidae</taxon>
        <taxon>Homo</taxon>
    </lineage>
</organism>
<keyword id="KW-0238">DNA-binding</keyword>
<keyword id="KW-0479">Metal-binding</keyword>
<keyword id="KW-0539">Nucleus</keyword>
<keyword id="KW-1267">Proteomics identification</keyword>
<keyword id="KW-1185">Reference proteome</keyword>
<keyword id="KW-0677">Repeat</keyword>
<keyword id="KW-0804">Transcription</keyword>
<keyword id="KW-0805">Transcription regulation</keyword>
<keyword id="KW-0862">Zinc</keyword>
<keyword id="KW-0863">Zinc-finger</keyword>
<comment type="function">
    <text>May be involved in transcriptional regulation.</text>
</comment>
<comment type="subcellular location">
    <subcellularLocation>
        <location evidence="3">Nucleus</location>
    </subcellularLocation>
</comment>
<comment type="similarity">
    <text evidence="3">Belongs to the krueppel C2H2-type zinc-finger protein family.</text>
</comment>
<protein>
    <recommendedName>
        <fullName>Zinc finger protein 157</fullName>
    </recommendedName>
    <alternativeName>
        <fullName>Zinc finger protein HZF22</fullName>
    </alternativeName>
</protein>
<gene>
    <name type="primary">ZNF157</name>
</gene>
<feature type="chain" id="PRO_0000047432" description="Zinc finger protein 157">
    <location>
        <begin position="1"/>
        <end position="506"/>
    </location>
</feature>
<feature type="domain" description="KRAB" evidence="2">
    <location>
        <begin position="27"/>
        <end position="98"/>
    </location>
</feature>
<feature type="zinc finger region" description="C2H2-type 1" evidence="1">
    <location>
        <begin position="162"/>
        <end position="184"/>
    </location>
</feature>
<feature type="zinc finger region" description="C2H2-type 2" evidence="1">
    <location>
        <begin position="190"/>
        <end position="212"/>
    </location>
</feature>
<feature type="zinc finger region" description="C2H2-type 3" evidence="1">
    <location>
        <begin position="218"/>
        <end position="240"/>
    </location>
</feature>
<feature type="zinc finger region" description="C2H2-type 4" evidence="1">
    <location>
        <begin position="246"/>
        <end position="268"/>
    </location>
</feature>
<feature type="zinc finger region" description="C2H2-type 5" evidence="1">
    <location>
        <begin position="274"/>
        <end position="296"/>
    </location>
</feature>
<feature type="zinc finger region" description="C2H2-type 6" evidence="1">
    <location>
        <begin position="302"/>
        <end position="324"/>
    </location>
</feature>
<feature type="zinc finger region" description="C2H2-type 7" evidence="1">
    <location>
        <begin position="330"/>
        <end position="352"/>
    </location>
</feature>
<feature type="zinc finger region" description="C2H2-type 8" evidence="1">
    <location>
        <begin position="358"/>
        <end position="380"/>
    </location>
</feature>
<feature type="zinc finger region" description="C2H2-type 9" evidence="1">
    <location>
        <begin position="386"/>
        <end position="408"/>
    </location>
</feature>
<feature type="zinc finger region" description="C2H2-type 10" evidence="1">
    <location>
        <begin position="414"/>
        <end position="436"/>
    </location>
</feature>
<feature type="zinc finger region" description="C2H2-type 11" evidence="1">
    <location>
        <begin position="442"/>
        <end position="464"/>
    </location>
</feature>
<feature type="zinc finger region" description="C2H2-type 12" evidence="1">
    <location>
        <begin position="470"/>
        <end position="492"/>
    </location>
</feature>
<feature type="sequence conflict" description="In Ref. 1; AAA97578." evidence="3" ref="1">
    <original>H</original>
    <variation>N</variation>
    <location>
        <position position="165"/>
    </location>
</feature>
<evidence type="ECO:0000255" key="1">
    <source>
        <dbReference type="PROSITE-ProRule" id="PRU00042"/>
    </source>
</evidence>
<evidence type="ECO:0000255" key="2">
    <source>
        <dbReference type="PROSITE-ProRule" id="PRU00119"/>
    </source>
</evidence>
<evidence type="ECO:0000305" key="3"/>
<reference key="1">
    <citation type="journal article" date="1995" name="Genomics">
        <title>Cloning and characterization of a novel zinc finger gene in Xp11.2.</title>
        <authorList>
            <person name="Derry J.M.J."/>
            <person name="Jess U."/>
            <person name="Francke U."/>
        </authorList>
    </citation>
    <scope>NUCLEOTIDE SEQUENCE [MRNA]</scope>
</reference>
<reference key="2">
    <citation type="journal article" date="2005" name="Nature">
        <title>The DNA sequence of the human X chromosome.</title>
        <authorList>
            <person name="Ross M.T."/>
            <person name="Grafham D.V."/>
            <person name="Coffey A.J."/>
            <person name="Scherer S."/>
            <person name="McLay K."/>
            <person name="Muzny D."/>
            <person name="Platzer M."/>
            <person name="Howell G.R."/>
            <person name="Burrows C."/>
            <person name="Bird C.P."/>
            <person name="Frankish A."/>
            <person name="Lovell F.L."/>
            <person name="Howe K.L."/>
            <person name="Ashurst J.L."/>
            <person name="Fulton R.S."/>
            <person name="Sudbrak R."/>
            <person name="Wen G."/>
            <person name="Jones M.C."/>
            <person name="Hurles M.E."/>
            <person name="Andrews T.D."/>
            <person name="Scott C.E."/>
            <person name="Searle S."/>
            <person name="Ramser J."/>
            <person name="Whittaker A."/>
            <person name="Deadman R."/>
            <person name="Carter N.P."/>
            <person name="Hunt S.E."/>
            <person name="Chen R."/>
            <person name="Cree A."/>
            <person name="Gunaratne P."/>
            <person name="Havlak P."/>
            <person name="Hodgson A."/>
            <person name="Metzker M.L."/>
            <person name="Richards S."/>
            <person name="Scott G."/>
            <person name="Steffen D."/>
            <person name="Sodergren E."/>
            <person name="Wheeler D.A."/>
            <person name="Worley K.C."/>
            <person name="Ainscough R."/>
            <person name="Ambrose K.D."/>
            <person name="Ansari-Lari M.A."/>
            <person name="Aradhya S."/>
            <person name="Ashwell R.I."/>
            <person name="Babbage A.K."/>
            <person name="Bagguley C.L."/>
            <person name="Ballabio A."/>
            <person name="Banerjee R."/>
            <person name="Barker G.E."/>
            <person name="Barlow K.F."/>
            <person name="Barrett I.P."/>
            <person name="Bates K.N."/>
            <person name="Beare D.M."/>
            <person name="Beasley H."/>
            <person name="Beasley O."/>
            <person name="Beck A."/>
            <person name="Bethel G."/>
            <person name="Blechschmidt K."/>
            <person name="Brady N."/>
            <person name="Bray-Allen S."/>
            <person name="Bridgeman A.M."/>
            <person name="Brown A.J."/>
            <person name="Brown M.J."/>
            <person name="Bonnin D."/>
            <person name="Bruford E.A."/>
            <person name="Buhay C."/>
            <person name="Burch P."/>
            <person name="Burford D."/>
            <person name="Burgess J."/>
            <person name="Burrill W."/>
            <person name="Burton J."/>
            <person name="Bye J.M."/>
            <person name="Carder C."/>
            <person name="Carrel L."/>
            <person name="Chako J."/>
            <person name="Chapman J.C."/>
            <person name="Chavez D."/>
            <person name="Chen E."/>
            <person name="Chen G."/>
            <person name="Chen Y."/>
            <person name="Chen Z."/>
            <person name="Chinault C."/>
            <person name="Ciccodicola A."/>
            <person name="Clark S.Y."/>
            <person name="Clarke G."/>
            <person name="Clee C.M."/>
            <person name="Clegg S."/>
            <person name="Clerc-Blankenburg K."/>
            <person name="Clifford K."/>
            <person name="Cobley V."/>
            <person name="Cole C.G."/>
            <person name="Conquer J.S."/>
            <person name="Corby N."/>
            <person name="Connor R.E."/>
            <person name="David R."/>
            <person name="Davies J."/>
            <person name="Davis C."/>
            <person name="Davis J."/>
            <person name="Delgado O."/>
            <person name="Deshazo D."/>
            <person name="Dhami P."/>
            <person name="Ding Y."/>
            <person name="Dinh H."/>
            <person name="Dodsworth S."/>
            <person name="Draper H."/>
            <person name="Dugan-Rocha S."/>
            <person name="Dunham A."/>
            <person name="Dunn M."/>
            <person name="Durbin K.J."/>
            <person name="Dutta I."/>
            <person name="Eades T."/>
            <person name="Ellwood M."/>
            <person name="Emery-Cohen A."/>
            <person name="Errington H."/>
            <person name="Evans K.L."/>
            <person name="Faulkner L."/>
            <person name="Francis F."/>
            <person name="Frankland J."/>
            <person name="Fraser A.E."/>
            <person name="Galgoczy P."/>
            <person name="Gilbert J."/>
            <person name="Gill R."/>
            <person name="Gloeckner G."/>
            <person name="Gregory S.G."/>
            <person name="Gribble S."/>
            <person name="Griffiths C."/>
            <person name="Grocock R."/>
            <person name="Gu Y."/>
            <person name="Gwilliam R."/>
            <person name="Hamilton C."/>
            <person name="Hart E.A."/>
            <person name="Hawes A."/>
            <person name="Heath P.D."/>
            <person name="Heitmann K."/>
            <person name="Hennig S."/>
            <person name="Hernandez J."/>
            <person name="Hinzmann B."/>
            <person name="Ho S."/>
            <person name="Hoffs M."/>
            <person name="Howden P.J."/>
            <person name="Huckle E.J."/>
            <person name="Hume J."/>
            <person name="Hunt P.J."/>
            <person name="Hunt A.R."/>
            <person name="Isherwood J."/>
            <person name="Jacob L."/>
            <person name="Johnson D."/>
            <person name="Jones S."/>
            <person name="de Jong P.J."/>
            <person name="Joseph S.S."/>
            <person name="Keenan S."/>
            <person name="Kelly S."/>
            <person name="Kershaw J.K."/>
            <person name="Khan Z."/>
            <person name="Kioschis P."/>
            <person name="Klages S."/>
            <person name="Knights A.J."/>
            <person name="Kosiura A."/>
            <person name="Kovar-Smith C."/>
            <person name="Laird G.K."/>
            <person name="Langford C."/>
            <person name="Lawlor S."/>
            <person name="Leversha M."/>
            <person name="Lewis L."/>
            <person name="Liu W."/>
            <person name="Lloyd C."/>
            <person name="Lloyd D.M."/>
            <person name="Loulseged H."/>
            <person name="Loveland J.E."/>
            <person name="Lovell J.D."/>
            <person name="Lozado R."/>
            <person name="Lu J."/>
            <person name="Lyne R."/>
            <person name="Ma J."/>
            <person name="Maheshwari M."/>
            <person name="Matthews L.H."/>
            <person name="McDowall J."/>
            <person name="McLaren S."/>
            <person name="McMurray A."/>
            <person name="Meidl P."/>
            <person name="Meitinger T."/>
            <person name="Milne S."/>
            <person name="Miner G."/>
            <person name="Mistry S.L."/>
            <person name="Morgan M."/>
            <person name="Morris S."/>
            <person name="Mueller I."/>
            <person name="Mullikin J.C."/>
            <person name="Nguyen N."/>
            <person name="Nordsiek G."/>
            <person name="Nyakatura G."/>
            <person name="O'dell C.N."/>
            <person name="Okwuonu G."/>
            <person name="Palmer S."/>
            <person name="Pandian R."/>
            <person name="Parker D."/>
            <person name="Parrish J."/>
            <person name="Pasternak S."/>
            <person name="Patel D."/>
            <person name="Pearce A.V."/>
            <person name="Pearson D.M."/>
            <person name="Pelan S.E."/>
            <person name="Perez L."/>
            <person name="Porter K.M."/>
            <person name="Ramsey Y."/>
            <person name="Reichwald K."/>
            <person name="Rhodes S."/>
            <person name="Ridler K.A."/>
            <person name="Schlessinger D."/>
            <person name="Schueler M.G."/>
            <person name="Sehra H.K."/>
            <person name="Shaw-Smith C."/>
            <person name="Shen H."/>
            <person name="Sheridan E.M."/>
            <person name="Shownkeen R."/>
            <person name="Skuce C.D."/>
            <person name="Smith M.L."/>
            <person name="Sotheran E.C."/>
            <person name="Steingruber H.E."/>
            <person name="Steward C.A."/>
            <person name="Storey R."/>
            <person name="Swann R.M."/>
            <person name="Swarbreck D."/>
            <person name="Tabor P.E."/>
            <person name="Taudien S."/>
            <person name="Taylor T."/>
            <person name="Teague B."/>
            <person name="Thomas K."/>
            <person name="Thorpe A."/>
            <person name="Timms K."/>
            <person name="Tracey A."/>
            <person name="Trevanion S."/>
            <person name="Tromans A.C."/>
            <person name="d'Urso M."/>
            <person name="Verduzco D."/>
            <person name="Villasana D."/>
            <person name="Waldron L."/>
            <person name="Wall M."/>
            <person name="Wang Q."/>
            <person name="Warren J."/>
            <person name="Warry G.L."/>
            <person name="Wei X."/>
            <person name="West A."/>
            <person name="Whitehead S.L."/>
            <person name="Whiteley M.N."/>
            <person name="Wilkinson J.E."/>
            <person name="Willey D.L."/>
            <person name="Williams G."/>
            <person name="Williams L."/>
            <person name="Williamson A."/>
            <person name="Williamson H."/>
            <person name="Wilming L."/>
            <person name="Woodmansey R.L."/>
            <person name="Wray P.W."/>
            <person name="Yen J."/>
            <person name="Zhang J."/>
            <person name="Zhou J."/>
            <person name="Zoghbi H."/>
            <person name="Zorilla S."/>
            <person name="Buck D."/>
            <person name="Reinhardt R."/>
            <person name="Poustka A."/>
            <person name="Rosenthal A."/>
            <person name="Lehrach H."/>
            <person name="Meindl A."/>
            <person name="Minx P.J."/>
            <person name="Hillier L.W."/>
            <person name="Willard H.F."/>
            <person name="Wilson R.K."/>
            <person name="Waterston R.H."/>
            <person name="Rice C.M."/>
            <person name="Vaudin M."/>
            <person name="Coulson A."/>
            <person name="Nelson D.L."/>
            <person name="Weinstock G."/>
            <person name="Sulston J.E."/>
            <person name="Durbin R.M."/>
            <person name="Hubbard T."/>
            <person name="Gibbs R.A."/>
            <person name="Beck S."/>
            <person name="Rogers J."/>
            <person name="Bentley D.R."/>
        </authorList>
    </citation>
    <scope>NUCLEOTIDE SEQUENCE [LARGE SCALE GENOMIC DNA]</scope>
</reference>
<reference key="3">
    <citation type="journal article" date="2004" name="Genome Res.">
        <title>The status, quality, and expansion of the NIH full-length cDNA project: the Mammalian Gene Collection (MGC).</title>
        <authorList>
            <consortium name="The MGC Project Team"/>
        </authorList>
    </citation>
    <scope>NUCLEOTIDE SEQUENCE [LARGE SCALE MRNA]</scope>
    <source>
        <tissue>Fetal brain</tissue>
    </source>
</reference>
<name>ZN157_HUMAN</name>
<sequence>MPANGTSPQRFPALIPGEPGRSFEGSVSFEDVAVDFTRQEWHRLDPAQRTMHKDVMLETYSNLASVGLCVAKPEMIFKLERGEELWILEEESSGHGYSGSLSLLCGNGSVGDNALRHDNDLLHHQKIQTLDQNVEYNGCRKAFHEKTGFVRRKRTPRGDKNFECHECGKAYCRKSNLVEHLRIHTGERPYECGECAKTFSARSYLIAHQKTHTGERPFECNECGKSFGRKSQLILHTRTHTGERPYECTECGKTFSEKATLTIHQRTHTGEKPYECSECGKTFRVKISLTQHHRTHTGEKPYECGECGKNFRAKKSLNQHQRIHTGEKPYECGECGKFFRMKMTLNNHQRTHTGEKPYQCNECGKSFRVHSSLGIHQRIHTGEKPYECNECGNAFYVKARLIEHQRMHSGEKPYECSECGKIFSMKKSLCQHRRTHTGEKPYECSECGNAFYVKVRLIEHQRIHTGERPFECQECGKAFCRKAHLTEHQRTHIGWSWRCTMKKASH</sequence>
<proteinExistence type="evidence at protein level"/>
<accession>P51786</accession>
<accession>Q96LE9</accession>